<name>PORD_PSEAE</name>
<protein>
    <recommendedName>
        <fullName>Porin D</fullName>
        <ecNumber>3.4.21.-</ecNumber>
    </recommendedName>
    <alternativeName>
        <fullName>Imipenem/basic amino acid-specific outer membrane pore</fullName>
    </alternativeName>
    <alternativeName>
        <fullName evidence="11 12">Outer membrane carboxylate channel D1</fullName>
        <shortName evidence="11 12">OccD1</shortName>
    </alternativeName>
    <alternativeName>
        <fullName evidence="10">Outer membrane protein D2</fullName>
    </alternativeName>
</protein>
<proteinExistence type="evidence at protein level"/>
<evidence type="ECO:0000269" key="1">
    <source>
    </source>
</evidence>
<evidence type="ECO:0000269" key="2">
    <source>
    </source>
</evidence>
<evidence type="ECO:0000269" key="3">
    <source>
    </source>
</evidence>
<evidence type="ECO:0000269" key="4">
    <source>
    </source>
</evidence>
<evidence type="ECO:0000269" key="5">
    <source>
    </source>
</evidence>
<evidence type="ECO:0000269" key="6">
    <source>
    </source>
</evidence>
<evidence type="ECO:0000269" key="7">
    <source>
    </source>
</evidence>
<evidence type="ECO:0000269" key="8">
    <source>
    </source>
</evidence>
<evidence type="ECO:0000269" key="9">
    <source>
    </source>
</evidence>
<evidence type="ECO:0000303" key="10">
    <source>
    </source>
</evidence>
<evidence type="ECO:0000303" key="11">
    <source>
    </source>
</evidence>
<evidence type="ECO:0000303" key="12">
    <source>
    </source>
</evidence>
<evidence type="ECO:0000305" key="13"/>
<evidence type="ECO:0007744" key="14">
    <source>
        <dbReference type="PDB" id="2ODJ"/>
    </source>
</evidence>
<evidence type="ECO:0007744" key="15">
    <source>
        <dbReference type="PDB" id="3SY7"/>
    </source>
</evidence>
<evidence type="ECO:0007744" key="16">
    <source>
        <dbReference type="PDB" id="4FOZ"/>
    </source>
</evidence>
<evidence type="ECO:0007829" key="17">
    <source>
        <dbReference type="PDB" id="3SY7"/>
    </source>
</evidence>
<dbReference type="EC" id="3.4.21.-"/>
<dbReference type="EMBL" id="X63152">
    <property type="protein sequence ID" value="CAA44855.1"/>
    <property type="molecule type" value="Genomic_DNA"/>
</dbReference>
<dbReference type="EMBL" id="Z14065">
    <property type="protein sequence ID" value="CAA78448.1"/>
    <property type="molecule type" value="Genomic_DNA"/>
</dbReference>
<dbReference type="EMBL" id="AE004091">
    <property type="protein sequence ID" value="AAG04347.1"/>
    <property type="molecule type" value="Genomic_DNA"/>
</dbReference>
<dbReference type="PIR" id="S23771">
    <property type="entry name" value="S23771"/>
</dbReference>
<dbReference type="RefSeq" id="NP_249649.1">
    <property type="nucleotide sequence ID" value="NC_002516.2"/>
</dbReference>
<dbReference type="RefSeq" id="WP_003112576.1">
    <property type="nucleotide sequence ID" value="NZ_QZGE01000007.1"/>
</dbReference>
<dbReference type="PDB" id="2ODJ">
    <property type="method" value="X-ray"/>
    <property type="resolution" value="2.90 A"/>
    <property type="chains" value="A/B=26-443"/>
</dbReference>
<dbReference type="PDB" id="3SY7">
    <property type="method" value="X-ray"/>
    <property type="resolution" value="2.15 A"/>
    <property type="chains" value="A=24-443"/>
</dbReference>
<dbReference type="PDB" id="4FOZ">
    <property type="method" value="X-ray"/>
    <property type="resolution" value="2.40 A"/>
    <property type="chains" value="A=24-443"/>
</dbReference>
<dbReference type="PDBsum" id="2ODJ"/>
<dbReference type="PDBsum" id="3SY7"/>
<dbReference type="PDBsum" id="4FOZ"/>
<dbReference type="SMR" id="P32722"/>
<dbReference type="DIP" id="DIP-29627N"/>
<dbReference type="FunCoup" id="P32722">
    <property type="interactions" value="64"/>
</dbReference>
<dbReference type="STRING" id="208964.PA0958"/>
<dbReference type="DrugBank" id="DB04233">
    <property type="generic name" value="(Hydroxyethyloxy)Tri(Ethyloxy)Octane"/>
</dbReference>
<dbReference type="TCDB" id="1.B.25.1.1">
    <property type="family name" value="the outer membrane porin (opr) family"/>
</dbReference>
<dbReference type="PaxDb" id="208964-PA0958"/>
<dbReference type="GeneID" id="881970"/>
<dbReference type="KEGG" id="pae:PA0958"/>
<dbReference type="PATRIC" id="fig|208964.12.peg.996"/>
<dbReference type="PseudoCAP" id="PA0958"/>
<dbReference type="HOGENOM" id="CLU_042378_2_0_6"/>
<dbReference type="InParanoid" id="P32722"/>
<dbReference type="OrthoDB" id="6759120at2"/>
<dbReference type="PhylomeDB" id="P32722"/>
<dbReference type="BioCyc" id="PAER208964:G1FZ6-979-MONOMER"/>
<dbReference type="EvolutionaryTrace" id="P32722"/>
<dbReference type="Proteomes" id="UP000002438">
    <property type="component" value="Chromosome"/>
</dbReference>
<dbReference type="GO" id="GO:0009279">
    <property type="term" value="C:cell outer membrane"/>
    <property type="evidence" value="ECO:0000314"/>
    <property type="project" value="UniProtKB"/>
</dbReference>
<dbReference type="GO" id="GO:0019867">
    <property type="term" value="C:outer membrane"/>
    <property type="evidence" value="ECO:0000314"/>
    <property type="project" value="PseudoCAP"/>
</dbReference>
<dbReference type="GO" id="GO:0046930">
    <property type="term" value="C:pore complex"/>
    <property type="evidence" value="ECO:0007669"/>
    <property type="project" value="UniProtKB-KW"/>
</dbReference>
<dbReference type="GO" id="GO:0015288">
    <property type="term" value="F:porin activity"/>
    <property type="evidence" value="ECO:0000314"/>
    <property type="project" value="UniProtKB"/>
</dbReference>
<dbReference type="GO" id="GO:0008236">
    <property type="term" value="F:serine-type peptidase activity"/>
    <property type="evidence" value="ECO:0000314"/>
    <property type="project" value="UniProtKB"/>
</dbReference>
<dbReference type="GO" id="GO:0015802">
    <property type="term" value="P:basic amino acid transport"/>
    <property type="evidence" value="ECO:0000314"/>
    <property type="project" value="UniProtKB"/>
</dbReference>
<dbReference type="GO" id="GO:0006811">
    <property type="term" value="P:monoatomic ion transport"/>
    <property type="evidence" value="ECO:0007669"/>
    <property type="project" value="UniProtKB-KW"/>
</dbReference>
<dbReference type="GO" id="GO:0006508">
    <property type="term" value="P:proteolysis"/>
    <property type="evidence" value="ECO:0007669"/>
    <property type="project" value="UniProtKB-KW"/>
</dbReference>
<dbReference type="FunFam" id="2.40.160.10:FF:000008">
    <property type="entry name" value="OprD family porin"/>
    <property type="match status" value="1"/>
</dbReference>
<dbReference type="Gene3D" id="2.40.160.10">
    <property type="entry name" value="Porin"/>
    <property type="match status" value="1"/>
</dbReference>
<dbReference type="InterPro" id="IPR005318">
    <property type="entry name" value="OM_porin_bac"/>
</dbReference>
<dbReference type="InterPro" id="IPR023614">
    <property type="entry name" value="Porin_dom_sf"/>
</dbReference>
<dbReference type="PANTHER" id="PTHR34596">
    <property type="entry name" value="CHITOPORIN"/>
    <property type="match status" value="1"/>
</dbReference>
<dbReference type="PANTHER" id="PTHR34596:SF2">
    <property type="entry name" value="CHITOPORIN"/>
    <property type="match status" value="1"/>
</dbReference>
<dbReference type="Pfam" id="PF03573">
    <property type="entry name" value="OprD"/>
    <property type="match status" value="1"/>
</dbReference>
<comment type="function">
    <text evidence="3 4 5 6 8">Porin with a specificity for basic amino acids (PubMed:2118530, PubMed:22272184, PubMed:23467408). Involved in facilitated diffusion of carbapenem beta-lactam antibiotics, such as imipenem and meropenem (PubMed:2109575, PubMed:22272184). Also possesses serine protease activity (PubMed:8843159).</text>
</comment>
<comment type="subcellular location">
    <subcellularLocation>
        <location evidence="3 4">Cell outer membrane</location>
        <topology evidence="4">Multi-pass membrane protein</topology>
    </subcellularLocation>
</comment>
<comment type="similarity">
    <text evidence="13">Belongs to the outer membrane porin (Opr) (TC 1.B.25) family.</text>
</comment>
<accession>P32722</accession>
<keyword id="KW-0002">3D-structure</keyword>
<keyword id="KW-0998">Cell outer membrane</keyword>
<keyword id="KW-0903">Direct protein sequencing</keyword>
<keyword id="KW-0378">Hydrolase</keyword>
<keyword id="KW-0406">Ion transport</keyword>
<keyword id="KW-0472">Membrane</keyword>
<keyword id="KW-0626">Porin</keyword>
<keyword id="KW-0645">Protease</keyword>
<keyword id="KW-1185">Reference proteome</keyword>
<keyword id="KW-0720">Serine protease</keyword>
<keyword id="KW-0732">Signal</keyword>
<keyword id="KW-0812">Transmembrane</keyword>
<keyword id="KW-1134">Transmembrane beta strand</keyword>
<keyword id="KW-0813">Transport</keyword>
<feature type="signal peptide" evidence="1 7">
    <location>
        <begin position="1"/>
        <end position="23"/>
    </location>
</feature>
<feature type="chain" id="PRO_0000027336" description="Porin D">
    <location>
        <begin position="24"/>
        <end position="443"/>
    </location>
</feature>
<feature type="active site" evidence="9">
    <location>
        <position position="179"/>
    </location>
</feature>
<feature type="active site" evidence="9">
    <location>
        <position position="231"/>
    </location>
</feature>
<feature type="active site" evidence="9">
    <location>
        <position position="319"/>
    </location>
</feature>
<feature type="mutagenesis site" description="Slight reduction in arginine transport." evidence="6">
    <original>S</original>
    <variation>A</variation>
    <location>
        <position position="153"/>
    </location>
</feature>
<feature type="mutagenesis site" description="Increases membrane conductance." evidence="2">
    <original>R</original>
    <variation>G</variation>
    <location>
        <position position="154"/>
    </location>
</feature>
<feature type="mutagenesis site" description="Loss of protease activity. No effect on porin activity." evidence="9">
    <original>H</original>
    <variation>Q</variation>
    <location>
        <position position="179"/>
    </location>
</feature>
<feature type="mutagenesis site" description="Slight reduction in arginine transport. Decreases arginine transport about 4-fold; when associated with R-305 and H-330. Exhibits about a 3-fold preference for glutamate versus arginine; when associated with R-305 and H-330." evidence="6">
    <original>Y</original>
    <variation>R</variation>
    <location>
        <position position="199"/>
    </location>
</feature>
<feature type="mutagenesis site" description="Loss of protease activity. No effect on porin activity." evidence="9">
    <original>D</original>
    <variation>N</variation>
    <location>
        <position position="231"/>
    </location>
</feature>
<feature type="mutagenesis site" description="Slight reduction in arginine transport. Decreases arginine transport about 4-fold; when associated with R-199 and H-330. Exhibits about a 3-fold preference for glutamate versus arginine; when associated with R-199 and H-330." evidence="6">
    <original>Y</original>
    <variation>R</variation>
    <location>
        <position position="305"/>
    </location>
</feature>
<feature type="mutagenesis site" description="Increases arginine transport almost 2-fold. Increases membrane conductance about 3-fold. Does not transport glutamate at a significant level." evidence="6">
    <location>
        <begin position="308"/>
        <end position="316"/>
    </location>
</feature>
<feature type="mutagenesis site" description="Loss of protease activity. No effect on porin activity." evidence="9">
    <original>S</original>
    <variation>A</variation>
    <location>
        <position position="319"/>
    </location>
</feature>
<feature type="mutagenesis site" description="About 2-fold reduction in arginine transport." evidence="6">
    <original>S</original>
    <variation>A</variation>
    <location>
        <position position="325"/>
    </location>
</feature>
<feature type="mutagenesis site" description="About 3-fold reduction in arginine transport." evidence="6">
    <original>D</original>
    <variation>A</variation>
    <location>
        <position position="330"/>
    </location>
</feature>
<feature type="mutagenesis site" description="Slight reduction in arginine transport. Decreases arginine transport about 4-fold; when associated with R-199 and H-330. Exhibits about a 3-fold preference for glutamate versus arginine; when associated with R-199 and H-330." evidence="6">
    <original>D</original>
    <variation>H</variation>
    <location>
        <position position="330"/>
    </location>
</feature>
<feature type="mutagenesis site" description="No effect on protease activity." evidence="9">
    <original>H</original>
    <variation>Q</variation>
    <location>
        <position position="390"/>
    </location>
</feature>
<feature type="mutagenesis site" description="Decreases arginine transport about 6-fold." evidence="6">
    <original>R</original>
    <variation>A</variation>
    <location>
        <position position="412"/>
    </location>
</feature>
<feature type="mutagenesis site" description="Decreases arginine transport about 6-fold." evidence="6">
    <original>R</original>
    <variation>A</variation>
    <location>
        <position position="414"/>
    </location>
</feature>
<feature type="mutagenesis site" description="Decreases arginine transport about 6-fold." evidence="6">
    <original>R</original>
    <variation>A</variation>
    <location>
        <position position="433"/>
    </location>
</feature>
<feature type="sequence conflict" description="In Ref. 2; AA sequence." evidence="13" ref="2">
    <original>L</original>
    <variation>Y</variation>
    <location>
        <position position="44"/>
    </location>
</feature>
<feature type="helix" evidence="17">
    <location>
        <begin position="30"/>
        <end position="32"/>
    </location>
</feature>
<feature type="turn" evidence="17">
    <location>
        <begin position="36"/>
        <end position="39"/>
    </location>
</feature>
<feature type="strand" evidence="17">
    <location>
        <begin position="41"/>
        <end position="54"/>
    </location>
</feature>
<feature type="strand" evidence="17">
    <location>
        <begin position="62"/>
        <end position="74"/>
    </location>
</feature>
<feature type="strand" evidence="17">
    <location>
        <begin position="79"/>
        <end position="98"/>
    </location>
</feature>
<feature type="strand" evidence="17">
    <location>
        <begin position="119"/>
        <end position="131"/>
    </location>
</feature>
<feature type="strand" evidence="17">
    <location>
        <begin position="134"/>
        <end position="141"/>
    </location>
</feature>
<feature type="strand" evidence="17">
    <location>
        <begin position="153"/>
        <end position="156"/>
    </location>
</feature>
<feature type="strand" evidence="17">
    <location>
        <begin position="160"/>
        <end position="167"/>
    </location>
</feature>
<feature type="strand" evidence="17">
    <location>
        <begin position="173"/>
        <end position="182"/>
    </location>
</feature>
<feature type="strand" evidence="17">
    <location>
        <begin position="194"/>
        <end position="197"/>
    </location>
</feature>
<feature type="turn" evidence="17">
    <location>
        <begin position="198"/>
        <end position="201"/>
    </location>
</feature>
<feature type="strand" evidence="17">
    <location>
        <begin position="202"/>
        <end position="217"/>
    </location>
</feature>
<feature type="strand" evidence="17">
    <location>
        <begin position="220"/>
        <end position="229"/>
    </location>
</feature>
<feature type="turn" evidence="17">
    <location>
        <begin position="230"/>
        <end position="232"/>
    </location>
</feature>
<feature type="strand" evidence="17">
    <location>
        <begin position="233"/>
        <end position="247"/>
    </location>
</feature>
<feature type="strand" evidence="17">
    <location>
        <begin position="250"/>
        <end position="263"/>
    </location>
</feature>
<feature type="strand" evidence="17">
    <location>
        <begin position="273"/>
        <end position="285"/>
    </location>
</feature>
<feature type="strand" evidence="17">
    <location>
        <begin position="288"/>
        <end position="301"/>
    </location>
</feature>
<feature type="strand" evidence="17">
    <location>
        <begin position="306"/>
        <end position="308"/>
    </location>
</feature>
<feature type="strand" evidence="17">
    <location>
        <begin position="337"/>
        <end position="346"/>
    </location>
</feature>
<feature type="turn" evidence="17">
    <location>
        <begin position="348"/>
        <end position="351"/>
    </location>
</feature>
<feature type="strand" evidence="17">
    <location>
        <begin position="355"/>
        <end position="367"/>
    </location>
</feature>
<feature type="helix" evidence="17">
    <location>
        <begin position="377"/>
        <end position="381"/>
    </location>
</feature>
<feature type="strand" evidence="17">
    <location>
        <begin position="386"/>
        <end position="400"/>
    </location>
</feature>
<feature type="turn" evidence="17">
    <location>
        <begin position="405"/>
        <end position="408"/>
    </location>
</feature>
<feature type="strand" evidence="17">
    <location>
        <begin position="410"/>
        <end position="420"/>
    </location>
</feature>
<feature type="helix" evidence="17">
    <location>
        <begin position="422"/>
        <end position="424"/>
    </location>
</feature>
<feature type="strand" evidence="17">
    <location>
        <begin position="429"/>
        <end position="439"/>
    </location>
</feature>
<sequence>MKVMKWSAIALAVSAGSTQFAVADAFVSDQAEAKGFIEDSSLDLLLRNYYFNRDGKSGSGDRVDWTQGFLTTYESGFTQGTVGFGVDAFGYLGLKLDGTSDKTGTGNLPVMNDGKPRDDYSRAGGAVKVRISKTMLKWGEMQPTAPVFAAGGSRLFPQTATGFQLQSSEFEGLDLEAGHFTEGKEPTTVKSRGELYATYAGETAKSADFIGGRYAITDNLSASLYGAELEDIYRQYYLNSNYTIPLASDQSLGFDFNIYRTNDEGKAKAGDISNTTWSLAAAYTLDAHTFTLAYQKVHGDQPFDYIGFGRNGSGAGGDSIFLANSVQYSDFNGPGEKSWQARYDLNLASYGVPGLTFMVRYINGKDIDGTKMSDNNVGYKNYGYGEDGKHHETNLEAKYVVQSGPAKDLSFRIRQAWHRANADQGEGDQNEFRLIVDYPLSIL</sequence>
<reference key="1">
    <citation type="journal article" date="1992" name="Antimicrob. Agents Chemother.">
        <title>Nucleotide sequence of the protein D2 gene of Pseudomonas aeruginosa.</title>
        <authorList>
            <person name="Yoneyama H."/>
            <person name="Yoshihara E."/>
            <person name="Nakae T."/>
        </authorList>
    </citation>
    <scope>NUCLEOTIDE SEQUENCE [GENOMIC DNA]</scope>
</reference>
<reference key="2">
    <citation type="journal article" date="1992" name="FEMS Microbiol. Lett.">
        <title>Analysis of two gene regions involved in the expression of the imipenem-specific, outer membrane porin protein OprD of Pseudomonas aeruginosa.</title>
        <authorList>
            <person name="Huang H."/>
            <person name="Siehnel R.J."/>
            <person name="Bellido F."/>
            <person name="Rawling E."/>
            <person name="Hancock R.E.W."/>
        </authorList>
    </citation>
    <scope>NUCLEOTIDE SEQUENCE [GENOMIC DNA]</scope>
    <scope>PROTEIN SEQUENCE OF 24-40</scope>
    <source>
        <strain>ATCC 15692 / PAO1 / H103</strain>
    </source>
</reference>
<reference key="3">
    <citation type="journal article" date="2000" name="Nature">
        <title>Complete genome sequence of Pseudomonas aeruginosa PAO1, an opportunistic pathogen.</title>
        <authorList>
            <person name="Stover C.K."/>
            <person name="Pham X.-Q.T."/>
            <person name="Erwin A.L."/>
            <person name="Mizoguchi S.D."/>
            <person name="Warrener P."/>
            <person name="Hickey M.J."/>
            <person name="Brinkman F.S.L."/>
            <person name="Hufnagle W.O."/>
            <person name="Kowalik D.J."/>
            <person name="Lagrou M."/>
            <person name="Garber R.L."/>
            <person name="Goltry L."/>
            <person name="Tolentino E."/>
            <person name="Westbrock-Wadman S."/>
            <person name="Yuan Y."/>
            <person name="Brody L.L."/>
            <person name="Coulter S.N."/>
            <person name="Folger K.R."/>
            <person name="Kas A."/>
            <person name="Larbig K."/>
            <person name="Lim R.M."/>
            <person name="Smith K.A."/>
            <person name="Spencer D.H."/>
            <person name="Wong G.K.-S."/>
            <person name="Wu Z."/>
            <person name="Paulsen I.T."/>
            <person name="Reizer J."/>
            <person name="Saier M.H. Jr."/>
            <person name="Hancock R.E.W."/>
            <person name="Lory S."/>
            <person name="Olson M.V."/>
        </authorList>
    </citation>
    <scope>NUCLEOTIDE SEQUENCE [LARGE SCALE GENOMIC DNA]</scope>
    <source>
        <strain>ATCC 15692 / DSM 22644 / CIP 104116 / JCM 14847 / LMG 12228 / 1C / PRS 101 / PAO1</strain>
    </source>
</reference>
<reference key="4">
    <citation type="journal article" date="1993" name="Enzyme Protein">
        <title>Two-dimensional polyacrylamide gel electrophoresis isolation and microsequencing of Pseudomonas aeruginosa proteins.</title>
        <authorList>
            <person name="Michea-Hamzehpour M."/>
            <person name="Sanchez J.-C."/>
            <person name="Epp S.F."/>
            <person name="Paquet N."/>
            <person name="Hughes G.J."/>
            <person name="Hochstrasser D.F."/>
            <person name="Pechere J.-C."/>
        </authorList>
    </citation>
    <scope>PROTEIN SEQUENCE OF 24-48</scope>
</reference>
<reference key="5">
    <citation type="journal article" date="1990" name="Antimicrob. Agents Chemother.">
        <title>Outer membrane protein D2 catalyzes facilitated diffusion of carbapenems and penems through the outer membrane of Pseudomonas aeruginosa.</title>
        <authorList>
            <person name="Trias J."/>
            <person name="Nikaido H."/>
        </authorList>
    </citation>
    <scope>FUNCTION</scope>
    <scope>SUBCELLULAR LOCATION</scope>
</reference>
<reference key="6">
    <citation type="journal article" date="1990" name="J. Biol. Chem.">
        <title>Protein D2 channel of the Pseudomonas aeruginosa outer membrane has a binding site for basic amino acids and peptides.</title>
        <authorList>
            <person name="Trias J."/>
            <person name="Nikaido H."/>
        </authorList>
    </citation>
    <scope>FUNCTION</scope>
    <scope>SUBCELLULAR LOCATION</scope>
</reference>
<reference key="7">
    <citation type="journal article" date="1996" name="FEBS Lett.">
        <title>Protein D2 porin of the Pseudomonas aeruginosa outer membrane bears the protease activity.</title>
        <authorList>
            <person name="Yoshihara E."/>
            <person name="Gotoh N."/>
            <person name="Nishino T."/>
            <person name="Nakae T."/>
        </authorList>
    </citation>
    <scope>FUNCTION AS A SERINE PROTEASE</scope>
</reference>
<reference key="8">
    <citation type="journal article" date="1998" name="Biochem. Biophys. Res. Commun.">
        <title>Identification of the catalytic triad of the protein D2 protease in Pseudomonas aeruginosa.</title>
        <authorList>
            <person name="Yoshihara E."/>
            <person name="Yoneyama H."/>
            <person name="Ono T."/>
            <person name="Nakae T."/>
        </authorList>
    </citation>
    <scope>MUTAGENESIS OF HIS-179; ASP-231; SER-319 AND HIS-390</scope>
    <scope>ACTIVE SITES</scope>
</reference>
<reference evidence="14" key="9">
    <citation type="journal article" date="2007" name="Nat. Struct. Mol. Biol.">
        <title>Structural insight into OprD substrate specificity.</title>
        <authorList>
            <person name="Biswas S."/>
            <person name="Mohammad M.M."/>
            <person name="Patel D.R."/>
            <person name="Movileanu L."/>
            <person name="van den Berg B."/>
        </authorList>
    </citation>
    <scope>X-RAY CRYSTALLOGRAPHY (2.90 ANGSTROMS) OF 26-443</scope>
    <scope>MUTAGENESIS OF ARG-154</scope>
</reference>
<reference evidence="15" key="10">
    <citation type="journal article" date="2012" name="PLoS Biol.">
        <title>Substrate specificity within a family of outer membrane carboxylate channels.</title>
        <authorList>
            <person name="Eren E."/>
            <person name="Vijayaraghavan J."/>
            <person name="Liu J."/>
            <person name="Cheneke B.R."/>
            <person name="Touw D.S."/>
            <person name="Lepore B.W."/>
            <person name="Indic M."/>
            <person name="Movileanu L."/>
            <person name="van den Berg B."/>
        </authorList>
    </citation>
    <scope>X-RAY CRYSTALLOGRAPHY (2.15 ANGSTROMS) OF 24-443</scope>
    <scope>FUNCTION</scope>
</reference>
<reference evidence="16" key="11">
    <citation type="journal article" date="2013" name="J. Biol. Chem.">
        <title>Toward understanding the outer membrane uptake of small molecules by Pseudomonas aeruginosa.</title>
        <authorList>
            <person name="Eren E."/>
            <person name="Parkin J."/>
            <person name="Adelanwa A."/>
            <person name="Cheneke B."/>
            <person name="Movileanu L."/>
            <person name="Khalid S."/>
            <person name="van den Berg B."/>
        </authorList>
    </citation>
    <scope>X-RAY CRYSTALLOGRAPHY (2.40 ANGSTROMS) OF 24-443 OF MUTANT ARG-305/HIS-330</scope>
    <scope>FUNCTION</scope>
    <scope>MUTAGENESIS OF SER-153; TYR-199; TYR-305; 308-PHE--GLY-316; SER-325; ASP-330; ARG-412; ARG-414 AND ARG-433</scope>
</reference>
<gene>
    <name type="primary">oprD</name>
    <name evidence="11" type="synonym">occD1</name>
    <name type="ordered locus">PA0958</name>
</gene>
<organism>
    <name type="scientific">Pseudomonas aeruginosa (strain ATCC 15692 / DSM 22644 / CIP 104116 / JCM 14847 / LMG 12228 / 1C / PRS 101 / PAO1)</name>
    <dbReference type="NCBI Taxonomy" id="208964"/>
    <lineage>
        <taxon>Bacteria</taxon>
        <taxon>Pseudomonadati</taxon>
        <taxon>Pseudomonadota</taxon>
        <taxon>Gammaproteobacteria</taxon>
        <taxon>Pseudomonadales</taxon>
        <taxon>Pseudomonadaceae</taxon>
        <taxon>Pseudomonas</taxon>
    </lineage>
</organism>